<comment type="function">
    <text evidence="1">Usually encoded in the trnK tRNA gene intron. Probably assists in splicing its own and other chloroplast group II introns.</text>
</comment>
<comment type="subcellular location">
    <subcellularLocation>
        <location>Plastid</location>
        <location>Chloroplast</location>
    </subcellularLocation>
</comment>
<comment type="similarity">
    <text evidence="1">Belongs to the intron maturase 2 family. MatK subfamily.</text>
</comment>
<geneLocation type="chloroplast"/>
<protein>
    <recommendedName>
        <fullName evidence="1">Maturase K</fullName>
    </recommendedName>
    <alternativeName>
        <fullName evidence="1">Intron maturase</fullName>
    </alternativeName>
</protein>
<keyword id="KW-0150">Chloroplast</keyword>
<keyword id="KW-0507">mRNA processing</keyword>
<keyword id="KW-0934">Plastid</keyword>
<keyword id="KW-0694">RNA-binding</keyword>
<keyword id="KW-0819">tRNA processing</keyword>
<reference key="1">
    <citation type="submission" date="2005-07" db="EMBL/GenBank/DDBJ databases">
        <title>Environmental energy and species richness in flowering plants.</title>
        <authorList>
            <person name="Davies T.J."/>
        </authorList>
    </citation>
    <scope>NUCLEOTIDE SEQUENCE [GENOMIC DNA]</scope>
</reference>
<accession>Q4H192</accession>
<proteinExistence type="inferred from homology"/>
<evidence type="ECO:0000255" key="1">
    <source>
        <dbReference type="HAMAP-Rule" id="MF_01390"/>
    </source>
</evidence>
<name>MATK_MICJU</name>
<dbReference type="EMBL" id="AJ579970">
    <property type="protein sequence ID" value="CAE45243.1"/>
    <property type="molecule type" value="Genomic_DNA"/>
</dbReference>
<dbReference type="GO" id="GO:0009507">
    <property type="term" value="C:chloroplast"/>
    <property type="evidence" value="ECO:0007669"/>
    <property type="project" value="UniProtKB-SubCell"/>
</dbReference>
<dbReference type="GO" id="GO:0003723">
    <property type="term" value="F:RNA binding"/>
    <property type="evidence" value="ECO:0007669"/>
    <property type="project" value="UniProtKB-KW"/>
</dbReference>
<dbReference type="GO" id="GO:0006397">
    <property type="term" value="P:mRNA processing"/>
    <property type="evidence" value="ECO:0007669"/>
    <property type="project" value="UniProtKB-KW"/>
</dbReference>
<dbReference type="GO" id="GO:0008380">
    <property type="term" value="P:RNA splicing"/>
    <property type="evidence" value="ECO:0007669"/>
    <property type="project" value="UniProtKB-UniRule"/>
</dbReference>
<dbReference type="GO" id="GO:0008033">
    <property type="term" value="P:tRNA processing"/>
    <property type="evidence" value="ECO:0007669"/>
    <property type="project" value="UniProtKB-KW"/>
</dbReference>
<dbReference type="HAMAP" id="MF_01390">
    <property type="entry name" value="MatK"/>
    <property type="match status" value="1"/>
</dbReference>
<dbReference type="InterPro" id="IPR024937">
    <property type="entry name" value="Domain_X"/>
</dbReference>
<dbReference type="InterPro" id="IPR002866">
    <property type="entry name" value="Maturase_MatK"/>
</dbReference>
<dbReference type="InterPro" id="IPR024942">
    <property type="entry name" value="Maturase_MatK_N"/>
</dbReference>
<dbReference type="PANTHER" id="PTHR34811">
    <property type="entry name" value="MATURASE K"/>
    <property type="match status" value="1"/>
</dbReference>
<dbReference type="PANTHER" id="PTHR34811:SF1">
    <property type="entry name" value="MATURASE K"/>
    <property type="match status" value="1"/>
</dbReference>
<dbReference type="Pfam" id="PF01348">
    <property type="entry name" value="Intron_maturas2"/>
    <property type="match status" value="1"/>
</dbReference>
<dbReference type="Pfam" id="PF01824">
    <property type="entry name" value="MatK_N"/>
    <property type="match status" value="1"/>
</dbReference>
<organism>
    <name type="scientific">Micranthus junceus</name>
    <name type="common">Micranthus plantagineus var. junceus</name>
    <dbReference type="NCBI Taxonomy" id="58962"/>
    <lineage>
        <taxon>Eukaryota</taxon>
        <taxon>Viridiplantae</taxon>
        <taxon>Streptophyta</taxon>
        <taxon>Embryophyta</taxon>
        <taxon>Tracheophyta</taxon>
        <taxon>Spermatophyta</taxon>
        <taxon>Magnoliopsida</taxon>
        <taxon>Liliopsida</taxon>
        <taxon>Asparagales</taxon>
        <taxon>Iridaceae</taxon>
        <taxon>Crocoideae</taxon>
        <taxon>Watsonieae</taxon>
        <taxon>Micranthus</taxon>
    </lineage>
</organism>
<feature type="chain" id="PRO_0000143523" description="Maturase K">
    <location>
        <begin position="1"/>
        <end position="522"/>
    </location>
</feature>
<sequence length="522" mass="62565">MEELQGYFEKDGSRQQPFLYPLLFQEYIYALAHDRSLNGNGSIFYEPLEIFGYDSKSSLALVKRLITRIYQQHFFLSSVNYSKQNRFVGHHHTNFFYSRFYSQMISDGFGIIVEIPFSLQLVSYLKEKEIPKSHNLRSIHSIFPFLEDKLVHFNYVSDILIPHPIHMEILVQILQCWIQDVPLLHFLRFFLHEYHNWNSFFITQNNSIYLFSKETKRLFRFLYNSYVYECEFVFVFLRKHSSYLRFTSFRTFLERRYFYVKMEHLQTEHLIIVCCDYFNGTLWSFKDPFMHYARCQGKAILVSKGTHLLMKKWKYNFVNLWQYYFYFWYQSYRIHINQLSKHSFHFLGYLSSLLKNSSTVRNKILDNSFLIDTLTTKFDTAVPVIFLIVSLSKAQFCTVSGHPISKPIWTDLSDSGIIERFGRICRNLSHYHSGSSKKQGLYRIKYILRLSCARTLARKHKSTVRTFLQKLGSRLLEEFFTEGEQDLSLILPKAILFPFQGSHRERIWYLDIIRINHLVNRS</sequence>
<gene>
    <name evidence="1" type="primary">matK</name>
</gene>